<comment type="function">
    <text evidence="2">ATP-binding (A) component of a common energy-coupling factor (ECF) ABC-transporter complex. Unlike classic ABC transporters this ECF transporter provides the energy necessary to transport a number of different substrates.</text>
</comment>
<comment type="subunit">
    <text evidence="2">Forms a stable energy-coupling factor (ECF) transporter complex composed of 2 membrane-embedded substrate-binding proteins (S component), 2 ATP-binding proteins (A component) and 2 transmembrane proteins (T component).</text>
</comment>
<comment type="subcellular location">
    <subcellularLocation>
        <location evidence="2">Cell membrane</location>
        <topology evidence="2">Peripheral membrane protein</topology>
    </subcellularLocation>
</comment>
<comment type="similarity">
    <text evidence="2">Belongs to the ABC transporter superfamily. Energy-coupling factor EcfA family.</text>
</comment>
<gene>
    <name evidence="2" type="primary">ecfAB</name>
    <name type="synonym">cbiO2</name>
    <name type="synonym">ecfA'</name>
    <name type="synonym">ybaE</name>
    <name type="ordered locus">BSU01460</name>
</gene>
<name>ECFA2_BACSU</name>
<evidence type="ECO:0000255" key="1"/>
<evidence type="ECO:0000255" key="2">
    <source>
        <dbReference type="HAMAP-Rule" id="MF_01710"/>
    </source>
</evidence>
<feature type="chain" id="PRO_0000091987" description="Energy-coupling factor transporter ATP-binding protein EcfA2">
    <location>
        <begin position="1"/>
        <end position="276"/>
    </location>
</feature>
<feature type="domain" description="ABC transporter" evidence="2">
    <location>
        <begin position="1"/>
        <end position="233"/>
    </location>
</feature>
<feature type="active site" description="Proton acceptor" evidence="1">
    <location>
        <position position="158"/>
    </location>
</feature>
<feature type="binding site" evidence="2">
    <location>
        <begin position="27"/>
        <end position="34"/>
    </location>
    <ligand>
        <name>ATP</name>
        <dbReference type="ChEBI" id="CHEBI:30616"/>
    </ligand>
</feature>
<sequence>MKTPFERLALYDINASIKEGSYVAVIGHTGSGKSTLLQHLNGLLKPTKGQISLGSTVIQAGKKNKDLKKLRKKVGIVFQFPEHQLFEETVLKDISFGPMNFGVKKEDAEQKAREMLQLVGLSEELLDRSPFELSGGQMRRVAIAGVLAMDPEVLVLDEPTAGLDPRGRKEIMDMFYELHQRGNLTTILVTHSMEDAAAYADEMIVMHKGTIQASGSPRDLFLKGEEMAGWGLDLPETIKFQRHLEAALGVRFNEPMLTIEDAAAEIRALFQGEKTL</sequence>
<organism>
    <name type="scientific">Bacillus subtilis (strain 168)</name>
    <dbReference type="NCBI Taxonomy" id="224308"/>
    <lineage>
        <taxon>Bacteria</taxon>
        <taxon>Bacillati</taxon>
        <taxon>Bacillota</taxon>
        <taxon>Bacilli</taxon>
        <taxon>Bacillales</taxon>
        <taxon>Bacillaceae</taxon>
        <taxon>Bacillus</taxon>
    </lineage>
</organism>
<protein>
    <recommendedName>
        <fullName evidence="2">Energy-coupling factor transporter ATP-binding protein EcfA2</fullName>
        <shortName evidence="2">ECF transporter A component EcfA2</shortName>
        <ecNumber evidence="2">7.-.-.-</ecNumber>
    </recommendedName>
    <alternativeName>
        <fullName>ECF transporter A component EcfA'</fullName>
    </alternativeName>
</protein>
<keyword id="KW-0067">ATP-binding</keyword>
<keyword id="KW-1003">Cell membrane</keyword>
<keyword id="KW-0472">Membrane</keyword>
<keyword id="KW-0547">Nucleotide-binding</keyword>
<keyword id="KW-1185">Reference proteome</keyword>
<keyword id="KW-1278">Translocase</keyword>
<keyword id="KW-0813">Transport</keyword>
<dbReference type="EC" id="7.-.-.-" evidence="2"/>
<dbReference type="EMBL" id="D64126">
    <property type="protein sequence ID" value="BAA10984.1"/>
    <property type="molecule type" value="Genomic_DNA"/>
</dbReference>
<dbReference type="EMBL" id="AL009126">
    <property type="protein sequence ID" value="CAB11922.1"/>
    <property type="molecule type" value="Genomic_DNA"/>
</dbReference>
<dbReference type="PIR" id="E69742">
    <property type="entry name" value="E69742"/>
</dbReference>
<dbReference type="RefSeq" id="NP_388027.1">
    <property type="nucleotide sequence ID" value="NC_000964.3"/>
</dbReference>
<dbReference type="RefSeq" id="WP_010886389.1">
    <property type="nucleotide sequence ID" value="NC_000964.3"/>
</dbReference>
<dbReference type="SMR" id="P70970"/>
<dbReference type="FunCoup" id="P70970">
    <property type="interactions" value="430"/>
</dbReference>
<dbReference type="STRING" id="224308.BSU01460"/>
<dbReference type="PaxDb" id="224308-BSU01460"/>
<dbReference type="EnsemblBacteria" id="CAB11922">
    <property type="protein sequence ID" value="CAB11922"/>
    <property type="gene ID" value="BSU_01460"/>
</dbReference>
<dbReference type="GeneID" id="938922"/>
<dbReference type="KEGG" id="bsu:BSU01460"/>
<dbReference type="PATRIC" id="fig|224308.43.peg.150"/>
<dbReference type="eggNOG" id="COG1122">
    <property type="taxonomic scope" value="Bacteria"/>
</dbReference>
<dbReference type="InParanoid" id="P70970"/>
<dbReference type="OrthoDB" id="9784332at2"/>
<dbReference type="PhylomeDB" id="P70970"/>
<dbReference type="BioCyc" id="BSUB:BSU01460-MONOMER"/>
<dbReference type="Proteomes" id="UP000001570">
    <property type="component" value="Chromosome"/>
</dbReference>
<dbReference type="GO" id="GO:0043190">
    <property type="term" value="C:ATP-binding cassette (ABC) transporter complex"/>
    <property type="evidence" value="ECO:0000318"/>
    <property type="project" value="GO_Central"/>
</dbReference>
<dbReference type="GO" id="GO:0005524">
    <property type="term" value="F:ATP binding"/>
    <property type="evidence" value="ECO:0000318"/>
    <property type="project" value="GO_Central"/>
</dbReference>
<dbReference type="GO" id="GO:0016887">
    <property type="term" value="F:ATP hydrolysis activity"/>
    <property type="evidence" value="ECO:0007669"/>
    <property type="project" value="InterPro"/>
</dbReference>
<dbReference type="GO" id="GO:0042626">
    <property type="term" value="F:ATPase-coupled transmembrane transporter activity"/>
    <property type="evidence" value="ECO:0000318"/>
    <property type="project" value="GO_Central"/>
</dbReference>
<dbReference type="CDD" id="cd03225">
    <property type="entry name" value="ABC_cobalt_CbiO_domain1"/>
    <property type="match status" value="1"/>
</dbReference>
<dbReference type="FunFam" id="3.40.50.300:FF:000224">
    <property type="entry name" value="Energy-coupling factor transporter ATP-binding protein EcfA"/>
    <property type="match status" value="1"/>
</dbReference>
<dbReference type="Gene3D" id="3.40.50.300">
    <property type="entry name" value="P-loop containing nucleotide triphosphate hydrolases"/>
    <property type="match status" value="1"/>
</dbReference>
<dbReference type="InterPro" id="IPR003593">
    <property type="entry name" value="AAA+_ATPase"/>
</dbReference>
<dbReference type="InterPro" id="IPR003439">
    <property type="entry name" value="ABC_transporter-like_ATP-bd"/>
</dbReference>
<dbReference type="InterPro" id="IPR017871">
    <property type="entry name" value="ABC_transporter-like_CS"/>
</dbReference>
<dbReference type="InterPro" id="IPR015856">
    <property type="entry name" value="ABC_transpr_CbiO/EcfA_su"/>
</dbReference>
<dbReference type="InterPro" id="IPR050095">
    <property type="entry name" value="ECF_ABC_transporter_ATP-bd"/>
</dbReference>
<dbReference type="InterPro" id="IPR030946">
    <property type="entry name" value="EcfA2"/>
</dbReference>
<dbReference type="InterPro" id="IPR027417">
    <property type="entry name" value="P-loop_NTPase"/>
</dbReference>
<dbReference type="NCBIfam" id="TIGR04521">
    <property type="entry name" value="ECF_ATPase_2"/>
    <property type="match status" value="1"/>
</dbReference>
<dbReference type="NCBIfam" id="NF010155">
    <property type="entry name" value="PRK13634.1"/>
    <property type="match status" value="1"/>
</dbReference>
<dbReference type="PANTHER" id="PTHR43553:SF27">
    <property type="entry name" value="ENERGY-COUPLING FACTOR TRANSPORTER ATP-BINDING PROTEIN ECFA2"/>
    <property type="match status" value="1"/>
</dbReference>
<dbReference type="PANTHER" id="PTHR43553">
    <property type="entry name" value="HEAVY METAL TRANSPORTER"/>
    <property type="match status" value="1"/>
</dbReference>
<dbReference type="Pfam" id="PF00005">
    <property type="entry name" value="ABC_tran"/>
    <property type="match status" value="1"/>
</dbReference>
<dbReference type="SMART" id="SM00382">
    <property type="entry name" value="AAA"/>
    <property type="match status" value="1"/>
</dbReference>
<dbReference type="SUPFAM" id="SSF52540">
    <property type="entry name" value="P-loop containing nucleoside triphosphate hydrolases"/>
    <property type="match status" value="1"/>
</dbReference>
<dbReference type="PROSITE" id="PS00211">
    <property type="entry name" value="ABC_TRANSPORTER_1"/>
    <property type="match status" value="1"/>
</dbReference>
<dbReference type="PROSITE" id="PS50893">
    <property type="entry name" value="ABC_TRANSPORTER_2"/>
    <property type="match status" value="1"/>
</dbReference>
<dbReference type="PROSITE" id="PS51246">
    <property type="entry name" value="CBIO"/>
    <property type="match status" value="1"/>
</dbReference>
<accession>P70970</accession>
<accession>Q797S2</accession>
<proteinExistence type="inferred from homology"/>
<reference key="1">
    <citation type="journal article" date="1996" name="Microbiology">
        <title>Sequence analysis of a 50 kb region between spo0H and rrnH on the Bacillus subtilis chromosome.</title>
        <authorList>
            <person name="Yasumoto K."/>
            <person name="Liu H."/>
            <person name="Jeong S.M."/>
            <person name="Ohashi Y."/>
            <person name="Kakinuma S."/>
            <person name="Tanaka K."/>
            <person name="Kawamura F."/>
            <person name="Yoshikawa H."/>
            <person name="Takahashi H."/>
        </authorList>
    </citation>
    <scope>NUCLEOTIDE SEQUENCE [GENOMIC DNA]</scope>
    <source>
        <strain>168</strain>
    </source>
</reference>
<reference key="2">
    <citation type="journal article" date="1997" name="Nature">
        <title>The complete genome sequence of the Gram-positive bacterium Bacillus subtilis.</title>
        <authorList>
            <person name="Kunst F."/>
            <person name="Ogasawara N."/>
            <person name="Moszer I."/>
            <person name="Albertini A.M."/>
            <person name="Alloni G."/>
            <person name="Azevedo V."/>
            <person name="Bertero M.G."/>
            <person name="Bessieres P."/>
            <person name="Bolotin A."/>
            <person name="Borchert S."/>
            <person name="Borriss R."/>
            <person name="Boursier L."/>
            <person name="Brans A."/>
            <person name="Braun M."/>
            <person name="Brignell S.C."/>
            <person name="Bron S."/>
            <person name="Brouillet S."/>
            <person name="Bruschi C.V."/>
            <person name="Caldwell B."/>
            <person name="Capuano V."/>
            <person name="Carter N.M."/>
            <person name="Choi S.-K."/>
            <person name="Codani J.-J."/>
            <person name="Connerton I.F."/>
            <person name="Cummings N.J."/>
            <person name="Daniel R.A."/>
            <person name="Denizot F."/>
            <person name="Devine K.M."/>
            <person name="Duesterhoeft A."/>
            <person name="Ehrlich S.D."/>
            <person name="Emmerson P.T."/>
            <person name="Entian K.-D."/>
            <person name="Errington J."/>
            <person name="Fabret C."/>
            <person name="Ferrari E."/>
            <person name="Foulger D."/>
            <person name="Fritz C."/>
            <person name="Fujita M."/>
            <person name="Fujita Y."/>
            <person name="Fuma S."/>
            <person name="Galizzi A."/>
            <person name="Galleron N."/>
            <person name="Ghim S.-Y."/>
            <person name="Glaser P."/>
            <person name="Goffeau A."/>
            <person name="Golightly E.J."/>
            <person name="Grandi G."/>
            <person name="Guiseppi G."/>
            <person name="Guy B.J."/>
            <person name="Haga K."/>
            <person name="Haiech J."/>
            <person name="Harwood C.R."/>
            <person name="Henaut A."/>
            <person name="Hilbert H."/>
            <person name="Holsappel S."/>
            <person name="Hosono S."/>
            <person name="Hullo M.-F."/>
            <person name="Itaya M."/>
            <person name="Jones L.-M."/>
            <person name="Joris B."/>
            <person name="Karamata D."/>
            <person name="Kasahara Y."/>
            <person name="Klaerr-Blanchard M."/>
            <person name="Klein C."/>
            <person name="Kobayashi Y."/>
            <person name="Koetter P."/>
            <person name="Koningstein G."/>
            <person name="Krogh S."/>
            <person name="Kumano M."/>
            <person name="Kurita K."/>
            <person name="Lapidus A."/>
            <person name="Lardinois S."/>
            <person name="Lauber J."/>
            <person name="Lazarevic V."/>
            <person name="Lee S.-M."/>
            <person name="Levine A."/>
            <person name="Liu H."/>
            <person name="Masuda S."/>
            <person name="Mauel C."/>
            <person name="Medigue C."/>
            <person name="Medina N."/>
            <person name="Mellado R.P."/>
            <person name="Mizuno M."/>
            <person name="Moestl D."/>
            <person name="Nakai S."/>
            <person name="Noback M."/>
            <person name="Noone D."/>
            <person name="O'Reilly M."/>
            <person name="Ogawa K."/>
            <person name="Ogiwara A."/>
            <person name="Oudega B."/>
            <person name="Park S.-H."/>
            <person name="Parro V."/>
            <person name="Pohl T.M."/>
            <person name="Portetelle D."/>
            <person name="Porwollik S."/>
            <person name="Prescott A.M."/>
            <person name="Presecan E."/>
            <person name="Pujic P."/>
            <person name="Purnelle B."/>
            <person name="Rapoport G."/>
            <person name="Rey M."/>
            <person name="Reynolds S."/>
            <person name="Rieger M."/>
            <person name="Rivolta C."/>
            <person name="Rocha E."/>
            <person name="Roche B."/>
            <person name="Rose M."/>
            <person name="Sadaie Y."/>
            <person name="Sato T."/>
            <person name="Scanlan E."/>
            <person name="Schleich S."/>
            <person name="Schroeter R."/>
            <person name="Scoffone F."/>
            <person name="Sekiguchi J."/>
            <person name="Sekowska A."/>
            <person name="Seror S.J."/>
            <person name="Serror P."/>
            <person name="Shin B.-S."/>
            <person name="Soldo B."/>
            <person name="Sorokin A."/>
            <person name="Tacconi E."/>
            <person name="Takagi T."/>
            <person name="Takahashi H."/>
            <person name="Takemaru K."/>
            <person name="Takeuchi M."/>
            <person name="Tamakoshi A."/>
            <person name="Tanaka T."/>
            <person name="Terpstra P."/>
            <person name="Tognoni A."/>
            <person name="Tosato V."/>
            <person name="Uchiyama S."/>
            <person name="Vandenbol M."/>
            <person name="Vannier F."/>
            <person name="Vassarotti A."/>
            <person name="Viari A."/>
            <person name="Wambutt R."/>
            <person name="Wedler E."/>
            <person name="Wedler H."/>
            <person name="Weitzenegger T."/>
            <person name="Winters P."/>
            <person name="Wipat A."/>
            <person name="Yamamoto H."/>
            <person name="Yamane K."/>
            <person name="Yasumoto K."/>
            <person name="Yata K."/>
            <person name="Yoshida K."/>
            <person name="Yoshikawa H.-F."/>
            <person name="Zumstein E."/>
            <person name="Yoshikawa H."/>
            <person name="Danchin A."/>
        </authorList>
    </citation>
    <scope>NUCLEOTIDE SEQUENCE [LARGE SCALE GENOMIC DNA]</scope>
    <source>
        <strain>168</strain>
    </source>
</reference>